<accession>C6Y4A7</accession>
<keyword id="KW-0256">Endoplasmic reticulum</keyword>
<keyword id="KW-0472">Membrane</keyword>
<keyword id="KW-1185">Reference proteome</keyword>
<keyword id="KW-0812">Transmembrane</keyword>
<keyword id="KW-1133">Transmembrane helix</keyword>
<proteinExistence type="evidence at transcript level"/>
<protein>
    <recommendedName>
        <fullName>ER membrane protein complex subunit 5</fullName>
    </recommendedName>
</protein>
<comment type="function">
    <text evidence="1">The EMC seems to be required for efficient folding of proteins in the endoplasmic reticulum (ER).</text>
</comment>
<comment type="subunit">
    <text evidence="1">Component of the ER membrane protein complex (EMC).</text>
</comment>
<comment type="subcellular location">
    <subcellularLocation>
        <location evidence="1">Endoplasmic reticulum membrane</location>
        <topology evidence="2">Multi-pass membrane protein</topology>
    </subcellularLocation>
</comment>
<comment type="similarity">
    <text evidence="3">Belongs to the membrane magnesium transporter (TC 1.A.67) family.</text>
</comment>
<name>EMC5_SCHPO</name>
<dbReference type="EMBL" id="CU329670">
    <property type="protein sequence ID" value="CBA11503.1"/>
    <property type="molecule type" value="Genomic_DNA"/>
</dbReference>
<dbReference type="RefSeq" id="XP_002742512.1">
    <property type="nucleotide sequence ID" value="XM_002742466.2"/>
</dbReference>
<dbReference type="STRING" id="284812.C6Y4A7"/>
<dbReference type="iPTMnet" id="C6Y4A7"/>
<dbReference type="PaxDb" id="4896-SPAP4C9.02.1"/>
<dbReference type="EnsemblFungi" id="SPAP4C9.02.1">
    <property type="protein sequence ID" value="SPAP4C9.02.1:pep"/>
    <property type="gene ID" value="SPAP4C9.02"/>
</dbReference>
<dbReference type="PomBase" id="SPAP4C9.02">
    <property type="gene designation" value="emc5"/>
</dbReference>
<dbReference type="VEuPathDB" id="FungiDB:SPAP4C9.02"/>
<dbReference type="HOGENOM" id="CLU_2224731_0_0_1"/>
<dbReference type="InParanoid" id="C6Y4A7"/>
<dbReference type="OMA" id="RCIVLCK"/>
<dbReference type="PRO" id="PR:C6Y4A7"/>
<dbReference type="Proteomes" id="UP000002485">
    <property type="component" value="Chromosome I"/>
</dbReference>
<dbReference type="GO" id="GO:0072546">
    <property type="term" value="C:EMC complex"/>
    <property type="evidence" value="ECO:0000266"/>
    <property type="project" value="PomBase"/>
</dbReference>
<dbReference type="GO" id="GO:0045048">
    <property type="term" value="P:protein insertion into ER membrane"/>
    <property type="evidence" value="ECO:0000305"/>
    <property type="project" value="PomBase"/>
</dbReference>
<dbReference type="InterPro" id="IPR018937">
    <property type="entry name" value="MMgT"/>
</dbReference>
<dbReference type="Pfam" id="PF10270">
    <property type="entry name" value="MMgT"/>
    <property type="match status" value="1"/>
</dbReference>
<gene>
    <name type="primary">emc5</name>
    <name type="ORF">SPAP4C9.02</name>
</gene>
<feature type="chain" id="PRO_0000389151" description="ER membrane protein complex subunit 5">
    <location>
        <begin position="1"/>
        <end position="106"/>
    </location>
</feature>
<feature type="topological domain" description="Cytoplasmic" evidence="3">
    <location>
        <begin position="1"/>
        <end position="12"/>
    </location>
</feature>
<feature type="transmembrane region" description="Helical" evidence="2">
    <location>
        <begin position="13"/>
        <end position="33"/>
    </location>
</feature>
<feature type="topological domain" description="Lumenal" evidence="3">
    <location>
        <begin position="34"/>
        <end position="46"/>
    </location>
</feature>
<feature type="transmembrane region" description="Helical" evidence="2">
    <location>
        <begin position="47"/>
        <end position="67"/>
    </location>
</feature>
<feature type="topological domain" description="Cytoplasmic" evidence="3">
    <location>
        <begin position="68"/>
        <end position="106"/>
    </location>
</feature>
<sequence>MESSTINAKKISVLLTLFSIIGYTAYSAHESILEIRQDGKLPLDIKCEVILVTLLFTFTTVIIASPLRSIQLNKWSHQRSDLAFLNSRTNFLRIKELKEKIEKVKN</sequence>
<organism>
    <name type="scientific">Schizosaccharomyces pombe (strain 972 / ATCC 24843)</name>
    <name type="common">Fission yeast</name>
    <dbReference type="NCBI Taxonomy" id="284812"/>
    <lineage>
        <taxon>Eukaryota</taxon>
        <taxon>Fungi</taxon>
        <taxon>Dikarya</taxon>
        <taxon>Ascomycota</taxon>
        <taxon>Taphrinomycotina</taxon>
        <taxon>Schizosaccharomycetes</taxon>
        <taxon>Schizosaccharomycetales</taxon>
        <taxon>Schizosaccharomycetaceae</taxon>
        <taxon>Schizosaccharomyces</taxon>
    </lineage>
</organism>
<evidence type="ECO:0000250" key="1">
    <source>
        <dbReference type="UniProtKB" id="P40540"/>
    </source>
</evidence>
<evidence type="ECO:0000255" key="2"/>
<evidence type="ECO:0000305" key="3"/>
<reference key="1">
    <citation type="journal article" date="2002" name="Nature">
        <title>The genome sequence of Schizosaccharomyces pombe.</title>
        <authorList>
            <person name="Wood V."/>
            <person name="Gwilliam R."/>
            <person name="Rajandream M.A."/>
            <person name="Lyne M.H."/>
            <person name="Lyne R."/>
            <person name="Stewart A."/>
            <person name="Sgouros J.G."/>
            <person name="Peat N."/>
            <person name="Hayles J."/>
            <person name="Baker S.G."/>
            <person name="Basham D."/>
            <person name="Bowman S."/>
            <person name="Brooks K."/>
            <person name="Brown D."/>
            <person name="Brown S."/>
            <person name="Chillingworth T."/>
            <person name="Churcher C.M."/>
            <person name="Collins M."/>
            <person name="Connor R."/>
            <person name="Cronin A."/>
            <person name="Davis P."/>
            <person name="Feltwell T."/>
            <person name="Fraser A."/>
            <person name="Gentles S."/>
            <person name="Goble A."/>
            <person name="Hamlin N."/>
            <person name="Harris D.E."/>
            <person name="Hidalgo J."/>
            <person name="Hodgson G."/>
            <person name="Holroyd S."/>
            <person name="Hornsby T."/>
            <person name="Howarth S."/>
            <person name="Huckle E.J."/>
            <person name="Hunt S."/>
            <person name="Jagels K."/>
            <person name="James K.D."/>
            <person name="Jones L."/>
            <person name="Jones M."/>
            <person name="Leather S."/>
            <person name="McDonald S."/>
            <person name="McLean J."/>
            <person name="Mooney P."/>
            <person name="Moule S."/>
            <person name="Mungall K.L."/>
            <person name="Murphy L.D."/>
            <person name="Niblett D."/>
            <person name="Odell C."/>
            <person name="Oliver K."/>
            <person name="O'Neil S."/>
            <person name="Pearson D."/>
            <person name="Quail M.A."/>
            <person name="Rabbinowitsch E."/>
            <person name="Rutherford K.M."/>
            <person name="Rutter S."/>
            <person name="Saunders D."/>
            <person name="Seeger K."/>
            <person name="Sharp S."/>
            <person name="Skelton J."/>
            <person name="Simmonds M.N."/>
            <person name="Squares R."/>
            <person name="Squares S."/>
            <person name="Stevens K."/>
            <person name="Taylor K."/>
            <person name="Taylor R.G."/>
            <person name="Tivey A."/>
            <person name="Walsh S.V."/>
            <person name="Warren T."/>
            <person name="Whitehead S."/>
            <person name="Woodward J.R."/>
            <person name="Volckaert G."/>
            <person name="Aert R."/>
            <person name="Robben J."/>
            <person name="Grymonprez B."/>
            <person name="Weltjens I."/>
            <person name="Vanstreels E."/>
            <person name="Rieger M."/>
            <person name="Schaefer M."/>
            <person name="Mueller-Auer S."/>
            <person name="Gabel C."/>
            <person name="Fuchs M."/>
            <person name="Duesterhoeft A."/>
            <person name="Fritzc C."/>
            <person name="Holzer E."/>
            <person name="Moestl D."/>
            <person name="Hilbert H."/>
            <person name="Borzym K."/>
            <person name="Langer I."/>
            <person name="Beck A."/>
            <person name="Lehrach H."/>
            <person name="Reinhardt R."/>
            <person name="Pohl T.M."/>
            <person name="Eger P."/>
            <person name="Zimmermann W."/>
            <person name="Wedler H."/>
            <person name="Wambutt R."/>
            <person name="Purnelle B."/>
            <person name="Goffeau A."/>
            <person name="Cadieu E."/>
            <person name="Dreano S."/>
            <person name="Gloux S."/>
            <person name="Lelaure V."/>
            <person name="Mottier S."/>
            <person name="Galibert F."/>
            <person name="Aves S.J."/>
            <person name="Xiang Z."/>
            <person name="Hunt C."/>
            <person name="Moore K."/>
            <person name="Hurst S.M."/>
            <person name="Lucas M."/>
            <person name="Rochet M."/>
            <person name="Gaillardin C."/>
            <person name="Tallada V.A."/>
            <person name="Garzon A."/>
            <person name="Thode G."/>
            <person name="Daga R.R."/>
            <person name="Cruzado L."/>
            <person name="Jimenez J."/>
            <person name="Sanchez M."/>
            <person name="del Rey F."/>
            <person name="Benito J."/>
            <person name="Dominguez A."/>
            <person name="Revuelta J.L."/>
            <person name="Moreno S."/>
            <person name="Armstrong J."/>
            <person name="Forsburg S.L."/>
            <person name="Cerutti L."/>
            <person name="Lowe T."/>
            <person name="McCombie W.R."/>
            <person name="Paulsen I."/>
            <person name="Potashkin J."/>
            <person name="Shpakovski G.V."/>
            <person name="Ussery D."/>
            <person name="Barrell B.G."/>
            <person name="Nurse P."/>
        </authorList>
    </citation>
    <scope>NUCLEOTIDE SEQUENCE [LARGE SCALE GENOMIC DNA]</scope>
    <source>
        <strain>972 / ATCC 24843</strain>
    </source>
</reference>
<reference key="2">
    <citation type="journal article" date="2008" name="Nature">
        <title>Dynamic repertoire of a eukaryotic transcriptome surveyed at single-nucleotide resolution.</title>
        <authorList>
            <person name="Wilhelm B.T."/>
            <person name="Marguerat S."/>
            <person name="Watt S."/>
            <person name="Schubert F."/>
            <person name="Wood V."/>
            <person name="Goodhead I."/>
            <person name="Penkett C.J."/>
            <person name="Rogers J."/>
            <person name="Baehler J."/>
        </authorList>
    </citation>
    <scope>IDENTIFICATION</scope>
</reference>